<accession>Q1C8L1</accession>
<proteinExistence type="inferred from homology"/>
<feature type="chain" id="PRO_0000264980" description="UvrABC system protein C">
    <location>
        <begin position="1"/>
        <end position="610"/>
    </location>
</feature>
<feature type="domain" description="GIY-YIG" evidence="1">
    <location>
        <begin position="16"/>
        <end position="94"/>
    </location>
</feature>
<feature type="domain" description="UVR" evidence="1">
    <location>
        <begin position="204"/>
        <end position="239"/>
    </location>
</feature>
<sequence>MTDLFDYKEFLKTVTSQPGVYRMYDTAGTVIYVGKAKDLKKRLTSYFRAQVANRKTETLVKNIAQIDVTVTHTETEALLLEHNYIKLYQPRYNVLLRDDKSYPLIFLSADEHPRLAVHRGAKHEKGEYFGPFPNSYAVRETLALLQKLFPVRQCENSVYRNRSRPCLQYQIGRCSGPCVEGLVSEEEYQRQVDYVRLFLSGKDQQVLTQLITRMEEASQQLHFEDAARIRDQIQAVRRVTEQQFVSGDSEDLDVIGVAFDAGLACVHVLFIRLGKVLGSRSYFPKVPAGTELSEVVQTFVGQFYLQGSQGRTLPGEILLDFTLTEKDLLASSLSELAGRKIQIQSRPRGDRARYLKLARTNASTALITRLSQQSTIHQRMKELAKVLKLDEINRMECFDISHTMGEQTVASCVVFDANGPVRSEYRRYNISGITPGDDYAAMAQVLKRRYGKALDDQKIPDVIFIDGGKGQLSQAFDVFASLNVPWDKQKPLLVGVAKGSDRKAGLETLFLASEGEGFSLPPDSPALHLIQHIRDDSHNHAITGHRQRRSKVKNTSALEMIEGVGPKRRQVLLKYMGGLQPLFNASVEEIAKVPGISQALAEKIHNALKH</sequence>
<comment type="function">
    <text evidence="1">The UvrABC repair system catalyzes the recognition and processing of DNA lesions. UvrC both incises the 5' and 3' sides of the lesion. The N-terminal half is responsible for the 3' incision and the C-terminal half is responsible for the 5' incision.</text>
</comment>
<comment type="subunit">
    <text evidence="1">Interacts with UvrB in an incision complex.</text>
</comment>
<comment type="subcellular location">
    <subcellularLocation>
        <location evidence="1">Cytoplasm</location>
    </subcellularLocation>
</comment>
<comment type="similarity">
    <text evidence="1">Belongs to the UvrC family.</text>
</comment>
<comment type="sequence caution" evidence="2">
    <conflict type="erroneous initiation">
        <sequence resource="EMBL-CDS" id="ABG13211"/>
    </conflict>
</comment>
<keyword id="KW-0963">Cytoplasm</keyword>
<keyword id="KW-0227">DNA damage</keyword>
<keyword id="KW-0228">DNA excision</keyword>
<keyword id="KW-0234">DNA repair</keyword>
<keyword id="KW-0267">Excision nuclease</keyword>
<keyword id="KW-0742">SOS response</keyword>
<gene>
    <name evidence="1" type="primary">uvrC</name>
    <name type="ordered locus">YPA_1244</name>
</gene>
<name>UVRC_YERPA</name>
<reference key="1">
    <citation type="journal article" date="2006" name="J. Bacteriol.">
        <title>Complete genome sequence of Yersinia pestis strains Antiqua and Nepal516: evidence of gene reduction in an emerging pathogen.</title>
        <authorList>
            <person name="Chain P.S.G."/>
            <person name="Hu P."/>
            <person name="Malfatti S.A."/>
            <person name="Radnedge L."/>
            <person name="Larimer F."/>
            <person name="Vergez L.M."/>
            <person name="Worsham P."/>
            <person name="Chu M.C."/>
            <person name="Andersen G.L."/>
        </authorList>
    </citation>
    <scope>NUCLEOTIDE SEQUENCE [LARGE SCALE GENOMIC DNA]</scope>
    <source>
        <strain>Antiqua</strain>
    </source>
</reference>
<protein>
    <recommendedName>
        <fullName evidence="1">UvrABC system protein C</fullName>
        <shortName evidence="1">Protein UvrC</shortName>
    </recommendedName>
    <alternativeName>
        <fullName evidence="1">Excinuclease ABC subunit C</fullName>
    </alternativeName>
</protein>
<evidence type="ECO:0000255" key="1">
    <source>
        <dbReference type="HAMAP-Rule" id="MF_00203"/>
    </source>
</evidence>
<evidence type="ECO:0000305" key="2"/>
<organism>
    <name type="scientific">Yersinia pestis bv. Antiqua (strain Antiqua)</name>
    <dbReference type="NCBI Taxonomy" id="360102"/>
    <lineage>
        <taxon>Bacteria</taxon>
        <taxon>Pseudomonadati</taxon>
        <taxon>Pseudomonadota</taxon>
        <taxon>Gammaproteobacteria</taxon>
        <taxon>Enterobacterales</taxon>
        <taxon>Yersiniaceae</taxon>
        <taxon>Yersinia</taxon>
    </lineage>
</organism>
<dbReference type="EMBL" id="CP000308">
    <property type="protein sequence ID" value="ABG13211.1"/>
    <property type="status" value="ALT_INIT"/>
    <property type="molecule type" value="Genomic_DNA"/>
</dbReference>
<dbReference type="RefSeq" id="WP_002220477.1">
    <property type="nucleotide sequence ID" value="NZ_CP009906.1"/>
</dbReference>
<dbReference type="SMR" id="Q1C8L1"/>
<dbReference type="GeneID" id="57976715"/>
<dbReference type="KEGG" id="ypa:YPA_1244"/>
<dbReference type="Proteomes" id="UP000001971">
    <property type="component" value="Chromosome"/>
</dbReference>
<dbReference type="GO" id="GO:0005737">
    <property type="term" value="C:cytoplasm"/>
    <property type="evidence" value="ECO:0007669"/>
    <property type="project" value="UniProtKB-SubCell"/>
</dbReference>
<dbReference type="GO" id="GO:0009380">
    <property type="term" value="C:excinuclease repair complex"/>
    <property type="evidence" value="ECO:0007669"/>
    <property type="project" value="InterPro"/>
</dbReference>
<dbReference type="GO" id="GO:0003677">
    <property type="term" value="F:DNA binding"/>
    <property type="evidence" value="ECO:0007669"/>
    <property type="project" value="UniProtKB-UniRule"/>
</dbReference>
<dbReference type="GO" id="GO:0009381">
    <property type="term" value="F:excinuclease ABC activity"/>
    <property type="evidence" value="ECO:0007669"/>
    <property type="project" value="UniProtKB-UniRule"/>
</dbReference>
<dbReference type="GO" id="GO:0006289">
    <property type="term" value="P:nucleotide-excision repair"/>
    <property type="evidence" value="ECO:0007669"/>
    <property type="project" value="UniProtKB-UniRule"/>
</dbReference>
<dbReference type="GO" id="GO:0009432">
    <property type="term" value="P:SOS response"/>
    <property type="evidence" value="ECO:0007669"/>
    <property type="project" value="UniProtKB-UniRule"/>
</dbReference>
<dbReference type="CDD" id="cd10434">
    <property type="entry name" value="GIY-YIG_UvrC_Cho"/>
    <property type="match status" value="1"/>
</dbReference>
<dbReference type="FunFam" id="1.10.150.20:FF:000005">
    <property type="entry name" value="UvrABC system protein C"/>
    <property type="match status" value="1"/>
</dbReference>
<dbReference type="FunFam" id="3.30.420.340:FF:000001">
    <property type="entry name" value="UvrABC system protein C"/>
    <property type="match status" value="1"/>
</dbReference>
<dbReference type="FunFam" id="3.40.1440.10:FF:000001">
    <property type="entry name" value="UvrABC system protein C"/>
    <property type="match status" value="1"/>
</dbReference>
<dbReference type="FunFam" id="4.10.860.10:FF:000002">
    <property type="entry name" value="UvrABC system protein C"/>
    <property type="match status" value="1"/>
</dbReference>
<dbReference type="Gene3D" id="1.10.150.20">
    <property type="entry name" value="5' to 3' exonuclease, C-terminal subdomain"/>
    <property type="match status" value="1"/>
</dbReference>
<dbReference type="Gene3D" id="3.40.1440.10">
    <property type="entry name" value="GIY-YIG endonuclease"/>
    <property type="match status" value="1"/>
</dbReference>
<dbReference type="Gene3D" id="4.10.860.10">
    <property type="entry name" value="UVR domain"/>
    <property type="match status" value="1"/>
</dbReference>
<dbReference type="Gene3D" id="3.30.420.340">
    <property type="entry name" value="UvrC, RNAse H endonuclease domain"/>
    <property type="match status" value="1"/>
</dbReference>
<dbReference type="HAMAP" id="MF_00203">
    <property type="entry name" value="UvrC"/>
    <property type="match status" value="1"/>
</dbReference>
<dbReference type="InterPro" id="IPR000305">
    <property type="entry name" value="GIY-YIG_endonuc"/>
</dbReference>
<dbReference type="InterPro" id="IPR035901">
    <property type="entry name" value="GIY-YIG_endonuc_sf"/>
</dbReference>
<dbReference type="InterPro" id="IPR047296">
    <property type="entry name" value="GIY-YIG_UvrC_Cho"/>
</dbReference>
<dbReference type="InterPro" id="IPR003583">
    <property type="entry name" value="Hlx-hairpin-Hlx_DNA-bd_motif"/>
</dbReference>
<dbReference type="InterPro" id="IPR010994">
    <property type="entry name" value="RuvA_2-like"/>
</dbReference>
<dbReference type="InterPro" id="IPR001943">
    <property type="entry name" value="UVR_dom"/>
</dbReference>
<dbReference type="InterPro" id="IPR036876">
    <property type="entry name" value="UVR_dom_sf"/>
</dbReference>
<dbReference type="InterPro" id="IPR050066">
    <property type="entry name" value="UvrABC_protein_C"/>
</dbReference>
<dbReference type="InterPro" id="IPR004791">
    <property type="entry name" value="UvrC"/>
</dbReference>
<dbReference type="InterPro" id="IPR001162">
    <property type="entry name" value="UvrC_RNase_H_dom"/>
</dbReference>
<dbReference type="InterPro" id="IPR038476">
    <property type="entry name" value="UvrC_RNase_H_dom_sf"/>
</dbReference>
<dbReference type="NCBIfam" id="NF001824">
    <property type="entry name" value="PRK00558.1-5"/>
    <property type="match status" value="1"/>
</dbReference>
<dbReference type="NCBIfam" id="TIGR00194">
    <property type="entry name" value="uvrC"/>
    <property type="match status" value="1"/>
</dbReference>
<dbReference type="PANTHER" id="PTHR30562:SF1">
    <property type="entry name" value="UVRABC SYSTEM PROTEIN C"/>
    <property type="match status" value="1"/>
</dbReference>
<dbReference type="PANTHER" id="PTHR30562">
    <property type="entry name" value="UVRC/OXIDOREDUCTASE"/>
    <property type="match status" value="1"/>
</dbReference>
<dbReference type="Pfam" id="PF01541">
    <property type="entry name" value="GIY-YIG"/>
    <property type="match status" value="1"/>
</dbReference>
<dbReference type="Pfam" id="PF14520">
    <property type="entry name" value="HHH_5"/>
    <property type="match status" value="1"/>
</dbReference>
<dbReference type="Pfam" id="PF02151">
    <property type="entry name" value="UVR"/>
    <property type="match status" value="1"/>
</dbReference>
<dbReference type="Pfam" id="PF22920">
    <property type="entry name" value="UvrC_RNaseH"/>
    <property type="match status" value="1"/>
</dbReference>
<dbReference type="Pfam" id="PF08459">
    <property type="entry name" value="UvrC_RNaseH_dom"/>
    <property type="match status" value="1"/>
</dbReference>
<dbReference type="SMART" id="SM00465">
    <property type="entry name" value="GIYc"/>
    <property type="match status" value="1"/>
</dbReference>
<dbReference type="SMART" id="SM00278">
    <property type="entry name" value="HhH1"/>
    <property type="match status" value="2"/>
</dbReference>
<dbReference type="SUPFAM" id="SSF46600">
    <property type="entry name" value="C-terminal UvrC-binding domain of UvrB"/>
    <property type="match status" value="1"/>
</dbReference>
<dbReference type="SUPFAM" id="SSF82771">
    <property type="entry name" value="GIY-YIG endonuclease"/>
    <property type="match status" value="1"/>
</dbReference>
<dbReference type="SUPFAM" id="SSF47781">
    <property type="entry name" value="RuvA domain 2-like"/>
    <property type="match status" value="1"/>
</dbReference>
<dbReference type="PROSITE" id="PS50164">
    <property type="entry name" value="GIY_YIG"/>
    <property type="match status" value="1"/>
</dbReference>
<dbReference type="PROSITE" id="PS50151">
    <property type="entry name" value="UVR"/>
    <property type="match status" value="1"/>
</dbReference>
<dbReference type="PROSITE" id="PS50165">
    <property type="entry name" value="UVRC"/>
    <property type="match status" value="1"/>
</dbReference>